<accession>Q19572</accession>
<organism>
    <name type="scientific">Caenorhabditis elegans</name>
    <dbReference type="NCBI Taxonomy" id="6239"/>
    <lineage>
        <taxon>Eukaryota</taxon>
        <taxon>Metazoa</taxon>
        <taxon>Ecdysozoa</taxon>
        <taxon>Nematoda</taxon>
        <taxon>Chromadorea</taxon>
        <taxon>Rhabditida</taxon>
        <taxon>Rhabditina</taxon>
        <taxon>Rhabditomorpha</taxon>
        <taxon>Rhabditoidea</taxon>
        <taxon>Rhabditidae</taxon>
        <taxon>Peloderinae</taxon>
        <taxon>Caenorhabditis</taxon>
    </lineage>
</organism>
<gene>
    <name type="primary">gpa-12</name>
    <name type="ORF">F18G5.3</name>
</gene>
<feature type="chain" id="PRO_0000203649" description="Guanine nucleotide-binding protein alpha-12 subunit">
    <location>
        <begin position="1"/>
        <end position="355"/>
    </location>
</feature>
<feature type="domain" description="G-alpha" evidence="2">
    <location>
        <begin position="28"/>
        <end position="355"/>
    </location>
</feature>
<feature type="region of interest" description="G1 motif" evidence="2">
    <location>
        <begin position="31"/>
        <end position="44"/>
    </location>
</feature>
<feature type="region of interest" description="G2 motif" evidence="2">
    <location>
        <begin position="174"/>
        <end position="182"/>
    </location>
</feature>
<feature type="region of interest" description="G3 motif" evidence="2">
    <location>
        <begin position="197"/>
        <end position="206"/>
    </location>
</feature>
<feature type="region of interest" description="G4 motif" evidence="2">
    <location>
        <begin position="266"/>
        <end position="273"/>
    </location>
</feature>
<feature type="region of interest" description="G5 motif" evidence="2">
    <location>
        <begin position="325"/>
        <end position="330"/>
    </location>
</feature>
<feature type="binding site" evidence="1">
    <location>
        <begin position="36"/>
        <end position="43"/>
    </location>
    <ligand>
        <name>GTP</name>
        <dbReference type="ChEBI" id="CHEBI:37565"/>
    </ligand>
</feature>
<feature type="binding site" evidence="1">
    <location>
        <position position="43"/>
    </location>
    <ligand>
        <name>Mg(2+)</name>
        <dbReference type="ChEBI" id="CHEBI:18420"/>
    </ligand>
</feature>
<feature type="binding site" evidence="1">
    <location>
        <begin position="176"/>
        <end position="182"/>
    </location>
    <ligand>
        <name>GTP</name>
        <dbReference type="ChEBI" id="CHEBI:37565"/>
    </ligand>
</feature>
<feature type="binding site" evidence="1">
    <location>
        <position position="182"/>
    </location>
    <ligand>
        <name>Mg(2+)</name>
        <dbReference type="ChEBI" id="CHEBI:18420"/>
    </ligand>
</feature>
<feature type="binding site" evidence="1">
    <location>
        <begin position="201"/>
        <end position="205"/>
    </location>
    <ligand>
        <name>GTP</name>
        <dbReference type="ChEBI" id="CHEBI:37565"/>
    </ligand>
</feature>
<feature type="binding site" evidence="1">
    <location>
        <begin position="270"/>
        <end position="273"/>
    </location>
    <ligand>
        <name>GTP</name>
        <dbReference type="ChEBI" id="CHEBI:37565"/>
    </ligand>
</feature>
<feature type="binding site" evidence="1">
    <location>
        <position position="327"/>
    </location>
    <ligand>
        <name>GTP</name>
        <dbReference type="ChEBI" id="CHEBI:37565"/>
    </ligand>
</feature>
<feature type="mutagenesis site" description="Probably constitutively active. Constitutive expression of nlp-29, nlp-31, nlp-34, cnc-2, cnc-4 and cnc-1 in absence of infection." evidence="4">
    <original>Q</original>
    <variation>L</variation>
    <location>
        <position position="205"/>
    </location>
</feature>
<comment type="function">
    <text evidence="3 4 5">Guanine nucleotide-binding proteins (G proteins) are involved as modulators or transducers in various transmembrane signaling systems (Probable). May play a role in resistance to fungal infection in the epidermis by regulating the up-regulation of several antimicrobial peptides of the NLP and CNC families (PubMed:19380113, PubMed:22470487). Upstream of plc-3, tpa-1 and the p38-like pathway, required for the expression of antimicrobial peptide nlp-29 in the epidermis in response to fungal infection or physical injury (PubMed:19380113).</text>
</comment>
<comment type="subunit">
    <text>G proteins are composed of 3 units; alpha, beta and gamma. The alpha chain contains the guanine nucleotide binding site.</text>
</comment>
<comment type="disruption phenotype">
    <text evidence="3">Up-regulation of nlp-29 is severely impaired in the hyp7 epidermal cell but not in vulva epidermal cells following fungal infection by D.coniospora or physical injury.</text>
</comment>
<comment type="similarity">
    <text evidence="5">Belongs to the G-alpha family.</text>
</comment>
<dbReference type="EMBL" id="AY008134">
    <property type="protein sequence ID" value="AAG32087.1"/>
    <property type="molecule type" value="mRNA"/>
</dbReference>
<dbReference type="EMBL" id="FO080202">
    <property type="protein sequence ID" value="CCD61930.1"/>
    <property type="molecule type" value="Genomic_DNA"/>
</dbReference>
<dbReference type="PIR" id="D89605">
    <property type="entry name" value="D89605"/>
</dbReference>
<dbReference type="RefSeq" id="NP_509557.1">
    <property type="nucleotide sequence ID" value="NM_077156.7"/>
</dbReference>
<dbReference type="SMR" id="Q19572"/>
<dbReference type="BioGRID" id="46073">
    <property type="interactions" value="1"/>
</dbReference>
<dbReference type="FunCoup" id="Q19572">
    <property type="interactions" value="1636"/>
</dbReference>
<dbReference type="STRING" id="6239.F18G5.3.1"/>
<dbReference type="PaxDb" id="6239-F18G5.3"/>
<dbReference type="PeptideAtlas" id="Q19572"/>
<dbReference type="EnsemblMetazoa" id="F18G5.3.1">
    <property type="protein sequence ID" value="F18G5.3.1"/>
    <property type="gene ID" value="WBGene00001674"/>
</dbReference>
<dbReference type="EnsemblMetazoa" id="F18G5.3.2">
    <property type="protein sequence ID" value="F18G5.3.2"/>
    <property type="gene ID" value="WBGene00001674"/>
</dbReference>
<dbReference type="GeneID" id="181157"/>
<dbReference type="KEGG" id="cel:CELE_F18G5.3"/>
<dbReference type="UCSC" id="F18G5.3">
    <property type="organism name" value="c. elegans"/>
</dbReference>
<dbReference type="AGR" id="WB:WBGene00001674"/>
<dbReference type="CTD" id="181157"/>
<dbReference type="WormBase" id="F18G5.3">
    <property type="protein sequence ID" value="CE20692"/>
    <property type="gene ID" value="WBGene00001674"/>
    <property type="gene designation" value="gpa-12"/>
</dbReference>
<dbReference type="eggNOG" id="KOG0082">
    <property type="taxonomic scope" value="Eukaryota"/>
</dbReference>
<dbReference type="GeneTree" id="ENSGT00940000168398"/>
<dbReference type="HOGENOM" id="CLU_014184_3_1_1"/>
<dbReference type="InParanoid" id="Q19572"/>
<dbReference type="OMA" id="IMRRQIN"/>
<dbReference type="OrthoDB" id="5817230at2759"/>
<dbReference type="PhylomeDB" id="Q19572"/>
<dbReference type="Reactome" id="R-CEL-193648">
    <property type="pathway name" value="NRAGE signals death through JNK"/>
</dbReference>
<dbReference type="Reactome" id="R-CEL-416482">
    <property type="pathway name" value="G alpha (12/13) signalling events"/>
</dbReference>
<dbReference type="Reactome" id="R-CEL-428930">
    <property type="pathway name" value="Thromboxane signalling through TP receptor"/>
</dbReference>
<dbReference type="Reactome" id="R-CEL-456926">
    <property type="pathway name" value="Thrombin signalling through proteinase activated receptors (PARs)"/>
</dbReference>
<dbReference type="Reactome" id="R-CEL-9013148">
    <property type="pathway name" value="CDC42 GTPase cycle"/>
</dbReference>
<dbReference type="Reactome" id="R-CEL-9013149">
    <property type="pathway name" value="RAC1 GTPase cycle"/>
</dbReference>
<dbReference type="PRO" id="PR:Q19572"/>
<dbReference type="Proteomes" id="UP000001940">
    <property type="component" value="Chromosome X"/>
</dbReference>
<dbReference type="GO" id="GO:0031526">
    <property type="term" value="C:brush border membrane"/>
    <property type="evidence" value="ECO:0000318"/>
    <property type="project" value="GO_Central"/>
</dbReference>
<dbReference type="GO" id="GO:0005737">
    <property type="term" value="C:cytoplasm"/>
    <property type="evidence" value="ECO:0000314"/>
    <property type="project" value="WormBase"/>
</dbReference>
<dbReference type="GO" id="GO:0005834">
    <property type="term" value="C:heterotrimeric G-protein complex"/>
    <property type="evidence" value="ECO:0000318"/>
    <property type="project" value="GO_Central"/>
</dbReference>
<dbReference type="GO" id="GO:0005634">
    <property type="term" value="C:nucleus"/>
    <property type="evidence" value="ECO:0000314"/>
    <property type="project" value="WormBase"/>
</dbReference>
<dbReference type="GO" id="GO:0031752">
    <property type="term" value="F:D5 dopamine receptor binding"/>
    <property type="evidence" value="ECO:0000318"/>
    <property type="project" value="GO_Central"/>
</dbReference>
<dbReference type="GO" id="GO:0031683">
    <property type="term" value="F:G-protein beta/gamma-subunit complex binding"/>
    <property type="evidence" value="ECO:0000318"/>
    <property type="project" value="GO_Central"/>
</dbReference>
<dbReference type="GO" id="GO:0005525">
    <property type="term" value="F:GTP binding"/>
    <property type="evidence" value="ECO:0007669"/>
    <property type="project" value="UniProtKB-KW"/>
</dbReference>
<dbReference type="GO" id="GO:0003924">
    <property type="term" value="F:GTPase activity"/>
    <property type="evidence" value="ECO:0000318"/>
    <property type="project" value="GO_Central"/>
</dbReference>
<dbReference type="GO" id="GO:0046872">
    <property type="term" value="F:metal ion binding"/>
    <property type="evidence" value="ECO:0007669"/>
    <property type="project" value="UniProtKB-KW"/>
</dbReference>
<dbReference type="GO" id="GO:0007188">
    <property type="term" value="P:adenylate cyclase-modulating G protein-coupled receptor signaling pathway"/>
    <property type="evidence" value="ECO:0000318"/>
    <property type="project" value="GO_Central"/>
</dbReference>
<dbReference type="GO" id="GO:0061760">
    <property type="term" value="P:antifungal innate immune response"/>
    <property type="evidence" value="ECO:0000315"/>
    <property type="project" value="WormBase"/>
</dbReference>
<dbReference type="GO" id="GO:0050832">
    <property type="term" value="P:defense response to fungus"/>
    <property type="evidence" value="ECO:0000315"/>
    <property type="project" value="UniProtKB"/>
</dbReference>
<dbReference type="GO" id="GO:0010628">
    <property type="term" value="P:positive regulation of gene expression"/>
    <property type="evidence" value="ECO:0000315"/>
    <property type="project" value="UniProtKB"/>
</dbReference>
<dbReference type="GO" id="GO:0007266">
    <property type="term" value="P:Rho protein signal transduction"/>
    <property type="evidence" value="ECO:0000318"/>
    <property type="project" value="GO_Central"/>
</dbReference>
<dbReference type="CDD" id="cd00066">
    <property type="entry name" value="G-alpha"/>
    <property type="match status" value="1"/>
</dbReference>
<dbReference type="FunFam" id="1.10.400.10:FF:000018">
    <property type="entry name" value="Guanine nucleotide-binding protein alpha-12 subunit"/>
    <property type="match status" value="1"/>
</dbReference>
<dbReference type="FunFam" id="3.40.50.300:FF:000754">
    <property type="entry name" value="Guanine nucleotide-binding protein subunit alpha-13"/>
    <property type="match status" value="1"/>
</dbReference>
<dbReference type="Gene3D" id="1.10.400.10">
    <property type="entry name" value="GI Alpha 1, domain 2-like"/>
    <property type="match status" value="1"/>
</dbReference>
<dbReference type="Gene3D" id="3.40.50.300">
    <property type="entry name" value="P-loop containing nucleotide triphosphate hydrolases"/>
    <property type="match status" value="1"/>
</dbReference>
<dbReference type="InterPro" id="IPR000469">
    <property type="entry name" value="Gprotein_alpha_12/13"/>
</dbReference>
<dbReference type="InterPro" id="IPR001019">
    <property type="entry name" value="Gprotein_alpha_su"/>
</dbReference>
<dbReference type="InterPro" id="IPR011025">
    <property type="entry name" value="GproteinA_insert"/>
</dbReference>
<dbReference type="InterPro" id="IPR027417">
    <property type="entry name" value="P-loop_NTPase"/>
</dbReference>
<dbReference type="PANTHER" id="PTHR10218">
    <property type="entry name" value="GTP-BINDING PROTEIN ALPHA SUBUNIT"/>
    <property type="match status" value="1"/>
</dbReference>
<dbReference type="PANTHER" id="PTHR10218:SF360">
    <property type="entry name" value="GUANINE NUCLEOTIDE-BINDING PROTEIN SUBUNIT ALPHA HOMOLOG"/>
    <property type="match status" value="1"/>
</dbReference>
<dbReference type="Pfam" id="PF00503">
    <property type="entry name" value="G-alpha"/>
    <property type="match status" value="1"/>
</dbReference>
<dbReference type="PRINTS" id="PR00318">
    <property type="entry name" value="GPROTEINA"/>
</dbReference>
<dbReference type="PRINTS" id="PR00440">
    <property type="entry name" value="GPROTEINA12"/>
</dbReference>
<dbReference type="SMART" id="SM00275">
    <property type="entry name" value="G_alpha"/>
    <property type="match status" value="1"/>
</dbReference>
<dbReference type="SUPFAM" id="SSF52540">
    <property type="entry name" value="P-loop containing nucleoside triphosphate hydrolases"/>
    <property type="match status" value="1"/>
</dbReference>
<dbReference type="SUPFAM" id="SSF47895">
    <property type="entry name" value="Transducin (alpha subunit), insertion domain"/>
    <property type="match status" value="1"/>
</dbReference>
<dbReference type="PROSITE" id="PS51882">
    <property type="entry name" value="G_ALPHA"/>
    <property type="match status" value="1"/>
</dbReference>
<reference key="1">
    <citation type="submission" date="2000-09" db="EMBL/GenBank/DDBJ databases">
        <title>Interaction analysis of the complete G-alpha subfamily of heterotrimeric G proteins from Caenorhabditis elegans.</title>
        <authorList>
            <person name="Cuppen E."/>
            <person name="Jansen G."/>
            <person name="Plasterk R.H.A."/>
        </authorList>
    </citation>
    <scope>NUCLEOTIDE SEQUENCE [MRNA]</scope>
    <source>
        <strain>Bristol N2</strain>
    </source>
</reference>
<reference key="2">
    <citation type="journal article" date="1998" name="Science">
        <title>Genome sequence of the nematode C. elegans: a platform for investigating biology.</title>
        <authorList>
            <consortium name="The C. elegans sequencing consortium"/>
        </authorList>
    </citation>
    <scope>NUCLEOTIDE SEQUENCE [LARGE SCALE GENOMIC DNA]</scope>
    <source>
        <strain>Bristol N2</strain>
    </source>
</reference>
<reference key="3">
    <citation type="journal article" date="1999" name="Nat. Genet.">
        <title>The complete family of genes encoding G proteins of Caenorhabditis elegans.</title>
        <authorList>
            <person name="Jansen G."/>
            <person name="Thijssen K.L."/>
            <person name="Werner P."/>
            <person name="van der Horst M."/>
            <person name="Hazendonk E."/>
            <person name="Plasterk R.H.A."/>
        </authorList>
    </citation>
    <scope>GENE FAMILY</scope>
    <scope>NOMENCLATURE</scope>
</reference>
<reference key="4">
    <citation type="journal article" date="2009" name="Cell Host Microbe">
        <title>Antifungal innate immunity in C. elegans: PKCdelta links G protein signaling and a conserved p38 MAPK cascade.</title>
        <authorList>
            <person name="Ziegler K."/>
            <person name="Kurz C.L."/>
            <person name="Cypowyj S."/>
            <person name="Couillault C."/>
            <person name="Pophillat M."/>
            <person name="Pujol N."/>
            <person name="Ewbank J.J."/>
        </authorList>
    </citation>
    <scope>FUNCTION</scope>
    <scope>DISRUPTION PHENOTYPE</scope>
</reference>
<reference key="5">
    <citation type="journal article" date="2012" name="PLoS ONE">
        <title>The pseudokinase NIPI-4 is a novel regulator of antimicrobial peptide gene expression.</title>
        <authorList>
            <person name="Labed S.A."/>
            <person name="Omi S."/>
            <person name="Gut M."/>
            <person name="Ewbank J.J."/>
            <person name="Pujol N."/>
        </authorList>
    </citation>
    <scope>FUNCTION</scope>
    <scope>MUTAGENESIS OF GLN-205</scope>
</reference>
<evidence type="ECO:0000250" key="1"/>
<evidence type="ECO:0000255" key="2">
    <source>
        <dbReference type="PROSITE-ProRule" id="PRU01230"/>
    </source>
</evidence>
<evidence type="ECO:0000269" key="3">
    <source>
    </source>
</evidence>
<evidence type="ECO:0000269" key="4">
    <source>
    </source>
</evidence>
<evidence type="ECO:0000305" key="5"/>
<keyword id="KW-0342">GTP-binding</keyword>
<keyword id="KW-0460">Magnesium</keyword>
<keyword id="KW-0479">Metal-binding</keyword>
<keyword id="KW-0547">Nucleotide-binding</keyword>
<keyword id="KW-1185">Reference proteome</keyword>
<keyword id="KW-0807">Transducer</keyword>
<proteinExistence type="evidence at protein level"/>
<name>GPA12_CAEEL</name>
<protein>
    <recommendedName>
        <fullName>Guanine nucleotide-binding protein alpha-12 subunit</fullName>
    </recommendedName>
</protein>
<sequence length="355" mass="41974">MVCCFGKKDERTKTIEKELHKERKIMRRQINLLLLGSGESGKSTFVKQMHIIHGAGEFTADEVRAYRQQIYQNAISAMRVLLDARNKLGIAWEDPKRQVEVEKVMRFSVGDLLKGIDFTTFVEVAPIISDFWNDAAIRKTYEQRNLFQISDSCQYFFEHIPRIAMPDFYPTNRDILFCRKATRGISEHIFEINKIPFRFIDVGGQRSQRQKWFQCFTDITSILFMVASNEYDQVILEDRRTNRVVESRSVFETIVNNRAFSNVSIILFMNKNDLLQEKVPKSDIRQYFTDFTGDHTLVRDVQFFLVDKFEASRRDRARPFFYHFTTAVDTENIRRVFRDVRESILEQNLKTLMMQ</sequence>